<accession>Q8PV45</accession>
<feature type="chain" id="PRO_0000125277" description="Large ribosomal subunit protein uL22">
    <location>
        <begin position="1"/>
        <end position="151"/>
    </location>
</feature>
<feature type="region of interest" description="Disordered" evidence="2">
    <location>
        <begin position="1"/>
        <end position="23"/>
    </location>
</feature>
<feature type="compositionally biased region" description="Polar residues" evidence="2">
    <location>
        <begin position="1"/>
        <end position="18"/>
    </location>
</feature>
<evidence type="ECO:0000255" key="1">
    <source>
        <dbReference type="HAMAP-Rule" id="MF_01331"/>
    </source>
</evidence>
<evidence type="ECO:0000256" key="2">
    <source>
        <dbReference type="SAM" id="MobiDB-lite"/>
    </source>
</evidence>
<evidence type="ECO:0000305" key="3"/>
<gene>
    <name evidence="1" type="primary">rpl22</name>
    <name type="ordered locus">MM_2129</name>
</gene>
<name>RL22_METMA</name>
<organism>
    <name type="scientific">Methanosarcina mazei (strain ATCC BAA-159 / DSM 3647 / Goe1 / Go1 / JCM 11833 / OCM 88)</name>
    <name type="common">Methanosarcina frisia</name>
    <dbReference type="NCBI Taxonomy" id="192952"/>
    <lineage>
        <taxon>Archaea</taxon>
        <taxon>Methanobacteriati</taxon>
        <taxon>Methanobacteriota</taxon>
        <taxon>Stenosarchaea group</taxon>
        <taxon>Methanomicrobia</taxon>
        <taxon>Methanosarcinales</taxon>
        <taxon>Methanosarcinaceae</taxon>
        <taxon>Methanosarcina</taxon>
    </lineage>
</organism>
<keyword id="KW-0687">Ribonucleoprotein</keyword>
<keyword id="KW-0689">Ribosomal protein</keyword>
<keyword id="KW-0694">RNA-binding</keyword>
<keyword id="KW-0699">rRNA-binding</keyword>
<comment type="function">
    <text evidence="1">This protein binds specifically to 23S rRNA. It makes multiple contacts with different domains of the 23S rRNA in the assembled 50S subunit and ribosome.</text>
</comment>
<comment type="function">
    <text evidence="1">The globular domain of the protein is located near the polypeptide exit tunnel on the outside of the subunit, while an extended beta-hairpin is found that lines the wall of the exit tunnel in the center of the 70S ribosome.</text>
</comment>
<comment type="subunit">
    <text evidence="1">Part of the 50S ribosomal subunit.</text>
</comment>
<comment type="similarity">
    <text evidence="1">Belongs to the universal ribosomal protein uL22 family.</text>
</comment>
<sequence length="151" mass="16720">MARINYSINADPENTSKAMGSELHISPKKSREVCCKIKGMKASEARKFLEDVIAMKQAVPFKRHSEGAGHRKGPMAGGRYPVSASKEILKVLKNAESNAEYKGLEPANMYIIHAAIQRGRVIHGFMPRARGRASPKDTETVNIEMILSEVR</sequence>
<proteinExistence type="inferred from homology"/>
<dbReference type="EMBL" id="AE008384">
    <property type="protein sequence ID" value="AAM31825.1"/>
    <property type="molecule type" value="Genomic_DNA"/>
</dbReference>
<dbReference type="RefSeq" id="WP_011034060.1">
    <property type="nucleotide sequence ID" value="NC_003901.1"/>
</dbReference>
<dbReference type="SMR" id="Q8PV45"/>
<dbReference type="KEGG" id="mma:MM_2129"/>
<dbReference type="PATRIC" id="fig|192952.21.peg.2443"/>
<dbReference type="eggNOG" id="arCOG04098">
    <property type="taxonomic scope" value="Archaea"/>
</dbReference>
<dbReference type="HOGENOM" id="CLU_083987_0_2_2"/>
<dbReference type="Proteomes" id="UP000000595">
    <property type="component" value="Chromosome"/>
</dbReference>
<dbReference type="GO" id="GO:0022625">
    <property type="term" value="C:cytosolic large ribosomal subunit"/>
    <property type="evidence" value="ECO:0007669"/>
    <property type="project" value="TreeGrafter"/>
</dbReference>
<dbReference type="GO" id="GO:0019843">
    <property type="term" value="F:rRNA binding"/>
    <property type="evidence" value="ECO:0007669"/>
    <property type="project" value="UniProtKB-UniRule"/>
</dbReference>
<dbReference type="GO" id="GO:0003735">
    <property type="term" value="F:structural constituent of ribosome"/>
    <property type="evidence" value="ECO:0007669"/>
    <property type="project" value="InterPro"/>
</dbReference>
<dbReference type="GO" id="GO:0002181">
    <property type="term" value="P:cytoplasmic translation"/>
    <property type="evidence" value="ECO:0007669"/>
    <property type="project" value="TreeGrafter"/>
</dbReference>
<dbReference type="CDD" id="cd00336">
    <property type="entry name" value="Ribosomal_L22"/>
    <property type="match status" value="1"/>
</dbReference>
<dbReference type="FunFam" id="3.90.470.10:FF:000015">
    <property type="entry name" value="50S ribosomal protein L22"/>
    <property type="match status" value="1"/>
</dbReference>
<dbReference type="Gene3D" id="3.90.470.10">
    <property type="entry name" value="Ribosomal protein L22/L17"/>
    <property type="match status" value="1"/>
</dbReference>
<dbReference type="HAMAP" id="MF_01331_A">
    <property type="entry name" value="Ribosomal_uL22_A"/>
    <property type="match status" value="1"/>
</dbReference>
<dbReference type="InterPro" id="IPR001063">
    <property type="entry name" value="Ribosomal_uL22"/>
</dbReference>
<dbReference type="InterPro" id="IPR005721">
    <property type="entry name" value="Ribosomal_uL22_euk/arc"/>
</dbReference>
<dbReference type="InterPro" id="IPR036394">
    <property type="entry name" value="Ribosomal_uL22_sf"/>
</dbReference>
<dbReference type="NCBIfam" id="NF003260">
    <property type="entry name" value="PRK04223.1"/>
    <property type="match status" value="1"/>
</dbReference>
<dbReference type="NCBIfam" id="TIGR01038">
    <property type="entry name" value="uL22_arch_euk"/>
    <property type="match status" value="1"/>
</dbReference>
<dbReference type="PANTHER" id="PTHR11593">
    <property type="entry name" value="60S RIBOSOMAL PROTEIN L17"/>
    <property type="match status" value="1"/>
</dbReference>
<dbReference type="PANTHER" id="PTHR11593:SF10">
    <property type="entry name" value="60S RIBOSOMAL PROTEIN L17"/>
    <property type="match status" value="1"/>
</dbReference>
<dbReference type="Pfam" id="PF00237">
    <property type="entry name" value="Ribosomal_L22"/>
    <property type="match status" value="1"/>
</dbReference>
<dbReference type="SUPFAM" id="SSF54843">
    <property type="entry name" value="Ribosomal protein L22"/>
    <property type="match status" value="1"/>
</dbReference>
<protein>
    <recommendedName>
        <fullName evidence="1">Large ribosomal subunit protein uL22</fullName>
    </recommendedName>
    <alternativeName>
        <fullName evidence="3">50S ribosomal protein L22</fullName>
    </alternativeName>
</protein>
<reference key="1">
    <citation type="journal article" date="2002" name="J. Mol. Microbiol. Biotechnol.">
        <title>The genome of Methanosarcina mazei: evidence for lateral gene transfer between Bacteria and Archaea.</title>
        <authorList>
            <person name="Deppenmeier U."/>
            <person name="Johann A."/>
            <person name="Hartsch T."/>
            <person name="Merkl R."/>
            <person name="Schmitz R.A."/>
            <person name="Martinez-Arias R."/>
            <person name="Henne A."/>
            <person name="Wiezer A."/>
            <person name="Baeumer S."/>
            <person name="Jacobi C."/>
            <person name="Brueggemann H."/>
            <person name="Lienard T."/>
            <person name="Christmann A."/>
            <person name="Boemecke M."/>
            <person name="Steckel S."/>
            <person name="Bhattacharyya A."/>
            <person name="Lykidis A."/>
            <person name="Overbeek R."/>
            <person name="Klenk H.-P."/>
            <person name="Gunsalus R.P."/>
            <person name="Fritz H.-J."/>
            <person name="Gottschalk G."/>
        </authorList>
    </citation>
    <scope>NUCLEOTIDE SEQUENCE [LARGE SCALE GENOMIC DNA]</scope>
    <source>
        <strain>ATCC BAA-159 / DSM 3647 / Goe1 / Go1 / JCM 11833 / OCM 88</strain>
    </source>
</reference>